<dbReference type="EC" id="6.1.1.11" evidence="1"/>
<dbReference type="EMBL" id="BX571856">
    <property type="protein sequence ID" value="CAG39037.1"/>
    <property type="molecule type" value="Genomic_DNA"/>
</dbReference>
<dbReference type="RefSeq" id="WP_000884337.1">
    <property type="nucleotide sequence ID" value="NC_002952.2"/>
</dbReference>
<dbReference type="SMR" id="Q6GKT6"/>
<dbReference type="KEGG" id="sar:SAR0009"/>
<dbReference type="HOGENOM" id="CLU_023797_1_1_9"/>
<dbReference type="UniPathway" id="UPA00906">
    <property type="reaction ID" value="UER00895"/>
</dbReference>
<dbReference type="Proteomes" id="UP000000596">
    <property type="component" value="Chromosome"/>
</dbReference>
<dbReference type="GO" id="GO:0005737">
    <property type="term" value="C:cytoplasm"/>
    <property type="evidence" value="ECO:0007669"/>
    <property type="project" value="UniProtKB-SubCell"/>
</dbReference>
<dbReference type="GO" id="GO:0005524">
    <property type="term" value="F:ATP binding"/>
    <property type="evidence" value="ECO:0007669"/>
    <property type="project" value="UniProtKB-UniRule"/>
</dbReference>
<dbReference type="GO" id="GO:0140096">
    <property type="term" value="F:catalytic activity, acting on a protein"/>
    <property type="evidence" value="ECO:0007669"/>
    <property type="project" value="UniProtKB-ARBA"/>
</dbReference>
<dbReference type="GO" id="GO:0004828">
    <property type="term" value="F:serine-tRNA ligase activity"/>
    <property type="evidence" value="ECO:0007669"/>
    <property type="project" value="UniProtKB-UniRule"/>
</dbReference>
<dbReference type="GO" id="GO:0016740">
    <property type="term" value="F:transferase activity"/>
    <property type="evidence" value="ECO:0007669"/>
    <property type="project" value="UniProtKB-ARBA"/>
</dbReference>
<dbReference type="GO" id="GO:0016260">
    <property type="term" value="P:selenocysteine biosynthetic process"/>
    <property type="evidence" value="ECO:0007669"/>
    <property type="project" value="UniProtKB-UniRule"/>
</dbReference>
<dbReference type="GO" id="GO:0006434">
    <property type="term" value="P:seryl-tRNA aminoacylation"/>
    <property type="evidence" value="ECO:0007669"/>
    <property type="project" value="UniProtKB-UniRule"/>
</dbReference>
<dbReference type="CDD" id="cd00770">
    <property type="entry name" value="SerRS_core"/>
    <property type="match status" value="1"/>
</dbReference>
<dbReference type="Gene3D" id="3.30.930.10">
    <property type="entry name" value="Bira Bifunctional Protein, Domain 2"/>
    <property type="match status" value="1"/>
</dbReference>
<dbReference type="Gene3D" id="1.10.287.40">
    <property type="entry name" value="Serine-tRNA synthetase, tRNA binding domain"/>
    <property type="match status" value="1"/>
</dbReference>
<dbReference type="HAMAP" id="MF_00176">
    <property type="entry name" value="Ser_tRNA_synth_type1"/>
    <property type="match status" value="1"/>
</dbReference>
<dbReference type="InterPro" id="IPR002314">
    <property type="entry name" value="aa-tRNA-synt_IIb"/>
</dbReference>
<dbReference type="InterPro" id="IPR006195">
    <property type="entry name" value="aa-tRNA-synth_II"/>
</dbReference>
<dbReference type="InterPro" id="IPR045864">
    <property type="entry name" value="aa-tRNA-synth_II/BPL/LPL"/>
</dbReference>
<dbReference type="InterPro" id="IPR002317">
    <property type="entry name" value="Ser-tRNA-ligase_type_1"/>
</dbReference>
<dbReference type="InterPro" id="IPR015866">
    <property type="entry name" value="Ser-tRNA-synth_1_N"/>
</dbReference>
<dbReference type="InterPro" id="IPR042103">
    <property type="entry name" value="SerRS_1_N_sf"/>
</dbReference>
<dbReference type="InterPro" id="IPR033729">
    <property type="entry name" value="SerRS_core"/>
</dbReference>
<dbReference type="InterPro" id="IPR010978">
    <property type="entry name" value="tRNA-bd_arm"/>
</dbReference>
<dbReference type="NCBIfam" id="TIGR00414">
    <property type="entry name" value="serS"/>
    <property type="match status" value="1"/>
</dbReference>
<dbReference type="PANTHER" id="PTHR43697:SF1">
    <property type="entry name" value="SERINE--TRNA LIGASE"/>
    <property type="match status" value="1"/>
</dbReference>
<dbReference type="PANTHER" id="PTHR43697">
    <property type="entry name" value="SERYL-TRNA SYNTHETASE"/>
    <property type="match status" value="1"/>
</dbReference>
<dbReference type="Pfam" id="PF02403">
    <property type="entry name" value="Seryl_tRNA_N"/>
    <property type="match status" value="1"/>
</dbReference>
<dbReference type="Pfam" id="PF00587">
    <property type="entry name" value="tRNA-synt_2b"/>
    <property type="match status" value="1"/>
</dbReference>
<dbReference type="PIRSF" id="PIRSF001529">
    <property type="entry name" value="Ser-tRNA-synth_IIa"/>
    <property type="match status" value="1"/>
</dbReference>
<dbReference type="PRINTS" id="PR00981">
    <property type="entry name" value="TRNASYNTHSER"/>
</dbReference>
<dbReference type="SUPFAM" id="SSF55681">
    <property type="entry name" value="Class II aaRS and biotin synthetases"/>
    <property type="match status" value="1"/>
</dbReference>
<dbReference type="SUPFAM" id="SSF46589">
    <property type="entry name" value="tRNA-binding arm"/>
    <property type="match status" value="1"/>
</dbReference>
<dbReference type="PROSITE" id="PS50862">
    <property type="entry name" value="AA_TRNA_LIGASE_II"/>
    <property type="match status" value="1"/>
</dbReference>
<sequence length="428" mass="48613">MLDIRLFRNEPDTVKSKIELRGDDPKVVDEILELDEQRRKLISATEEMKARRNKVSEEIALKKRNKENADDVIAEMRTLGDDIKEKDSQLNEIDSKMTGILCRIPNLISDDVPQGESDEDNVEVKKWGTPREFSFEPKAHWDIVEELKMADFDRAAKVSGARFVYLTNEGAQLERALMNYMITKHTTQHGYTEMMVPQLVNADTMYGTGQLPKFEEDLFKVEKEGLYTIPTAEVPLTNFYRNEIIQPGVLPEKFTGQSACFRSEAGSAGRDTRGLIRLHQFDKVEMVRFEQPEDSWNALEEMTTNAEAILEELGLPYRRVILCTGDIGFSASKTYDLEVWLPSYNDYKEISSCSNCTDFQARRANIRFKRDKAAKPELAHTLNGSGLAVGRTFAAIVENYQNEDGTVTIPEALVPFMGGKTQISKPVK</sequence>
<name>SYS_STAAR</name>
<reference key="1">
    <citation type="journal article" date="2004" name="Proc. Natl. Acad. Sci. U.S.A.">
        <title>Complete genomes of two clinical Staphylococcus aureus strains: evidence for the rapid evolution of virulence and drug resistance.</title>
        <authorList>
            <person name="Holden M.T.G."/>
            <person name="Feil E.J."/>
            <person name="Lindsay J.A."/>
            <person name="Peacock S.J."/>
            <person name="Day N.P.J."/>
            <person name="Enright M.C."/>
            <person name="Foster T.J."/>
            <person name="Moore C.E."/>
            <person name="Hurst L."/>
            <person name="Atkin R."/>
            <person name="Barron A."/>
            <person name="Bason N."/>
            <person name="Bentley S.D."/>
            <person name="Chillingworth C."/>
            <person name="Chillingworth T."/>
            <person name="Churcher C."/>
            <person name="Clark L."/>
            <person name="Corton C."/>
            <person name="Cronin A."/>
            <person name="Doggett J."/>
            <person name="Dowd L."/>
            <person name="Feltwell T."/>
            <person name="Hance Z."/>
            <person name="Harris B."/>
            <person name="Hauser H."/>
            <person name="Holroyd S."/>
            <person name="Jagels K."/>
            <person name="James K.D."/>
            <person name="Lennard N."/>
            <person name="Line A."/>
            <person name="Mayes R."/>
            <person name="Moule S."/>
            <person name="Mungall K."/>
            <person name="Ormond D."/>
            <person name="Quail M.A."/>
            <person name="Rabbinowitsch E."/>
            <person name="Rutherford K.M."/>
            <person name="Sanders M."/>
            <person name="Sharp S."/>
            <person name="Simmonds M."/>
            <person name="Stevens K."/>
            <person name="Whitehead S."/>
            <person name="Barrell B.G."/>
            <person name="Spratt B.G."/>
            <person name="Parkhill J."/>
        </authorList>
    </citation>
    <scope>NUCLEOTIDE SEQUENCE [LARGE SCALE GENOMIC DNA]</scope>
    <source>
        <strain>MRSA252</strain>
    </source>
</reference>
<comment type="function">
    <text evidence="1">Catalyzes the attachment of serine to tRNA(Ser). Is also able to aminoacylate tRNA(Sec) with serine, to form the misacylated tRNA L-seryl-tRNA(Sec), which will be further converted into selenocysteinyl-tRNA(Sec).</text>
</comment>
<comment type="catalytic activity">
    <reaction evidence="1">
        <text>tRNA(Ser) + L-serine + ATP = L-seryl-tRNA(Ser) + AMP + diphosphate + H(+)</text>
        <dbReference type="Rhea" id="RHEA:12292"/>
        <dbReference type="Rhea" id="RHEA-COMP:9669"/>
        <dbReference type="Rhea" id="RHEA-COMP:9703"/>
        <dbReference type="ChEBI" id="CHEBI:15378"/>
        <dbReference type="ChEBI" id="CHEBI:30616"/>
        <dbReference type="ChEBI" id="CHEBI:33019"/>
        <dbReference type="ChEBI" id="CHEBI:33384"/>
        <dbReference type="ChEBI" id="CHEBI:78442"/>
        <dbReference type="ChEBI" id="CHEBI:78533"/>
        <dbReference type="ChEBI" id="CHEBI:456215"/>
        <dbReference type="EC" id="6.1.1.11"/>
    </reaction>
</comment>
<comment type="catalytic activity">
    <reaction evidence="1">
        <text>tRNA(Sec) + L-serine + ATP = L-seryl-tRNA(Sec) + AMP + diphosphate + H(+)</text>
        <dbReference type="Rhea" id="RHEA:42580"/>
        <dbReference type="Rhea" id="RHEA-COMP:9742"/>
        <dbReference type="Rhea" id="RHEA-COMP:10128"/>
        <dbReference type="ChEBI" id="CHEBI:15378"/>
        <dbReference type="ChEBI" id="CHEBI:30616"/>
        <dbReference type="ChEBI" id="CHEBI:33019"/>
        <dbReference type="ChEBI" id="CHEBI:33384"/>
        <dbReference type="ChEBI" id="CHEBI:78442"/>
        <dbReference type="ChEBI" id="CHEBI:78533"/>
        <dbReference type="ChEBI" id="CHEBI:456215"/>
        <dbReference type="EC" id="6.1.1.11"/>
    </reaction>
</comment>
<comment type="pathway">
    <text evidence="1">Aminoacyl-tRNA biosynthesis; selenocysteinyl-tRNA(Sec) biosynthesis; L-seryl-tRNA(Sec) from L-serine and tRNA(Sec): step 1/1.</text>
</comment>
<comment type="subunit">
    <text evidence="1">Homodimer. The tRNA molecule binds across the dimer.</text>
</comment>
<comment type="subcellular location">
    <subcellularLocation>
        <location evidence="1">Cytoplasm</location>
    </subcellularLocation>
</comment>
<comment type="domain">
    <text evidence="1">Consists of two distinct domains, a catalytic core and a N-terminal extension that is involved in tRNA binding.</text>
</comment>
<comment type="similarity">
    <text evidence="1">Belongs to the class-II aminoacyl-tRNA synthetase family. Type-1 seryl-tRNA synthetase subfamily.</text>
</comment>
<evidence type="ECO:0000255" key="1">
    <source>
        <dbReference type="HAMAP-Rule" id="MF_00176"/>
    </source>
</evidence>
<proteinExistence type="inferred from homology"/>
<feature type="chain" id="PRO_0000122121" description="Serine--tRNA ligase">
    <location>
        <begin position="1"/>
        <end position="428"/>
    </location>
</feature>
<feature type="binding site" evidence="1">
    <location>
        <begin position="231"/>
        <end position="233"/>
    </location>
    <ligand>
        <name>L-serine</name>
        <dbReference type="ChEBI" id="CHEBI:33384"/>
    </ligand>
</feature>
<feature type="binding site" evidence="1">
    <location>
        <begin position="262"/>
        <end position="264"/>
    </location>
    <ligand>
        <name>ATP</name>
        <dbReference type="ChEBI" id="CHEBI:30616"/>
    </ligand>
</feature>
<feature type="binding site" evidence="1">
    <location>
        <position position="285"/>
    </location>
    <ligand>
        <name>L-serine</name>
        <dbReference type="ChEBI" id="CHEBI:33384"/>
    </ligand>
</feature>
<feature type="binding site" evidence="1">
    <location>
        <begin position="349"/>
        <end position="352"/>
    </location>
    <ligand>
        <name>ATP</name>
        <dbReference type="ChEBI" id="CHEBI:30616"/>
    </ligand>
</feature>
<feature type="binding site" evidence="1">
    <location>
        <position position="385"/>
    </location>
    <ligand>
        <name>L-serine</name>
        <dbReference type="ChEBI" id="CHEBI:33384"/>
    </ligand>
</feature>
<keyword id="KW-0030">Aminoacyl-tRNA synthetase</keyword>
<keyword id="KW-0067">ATP-binding</keyword>
<keyword id="KW-0963">Cytoplasm</keyword>
<keyword id="KW-0436">Ligase</keyword>
<keyword id="KW-0547">Nucleotide-binding</keyword>
<keyword id="KW-0648">Protein biosynthesis</keyword>
<accession>Q6GKT6</accession>
<protein>
    <recommendedName>
        <fullName evidence="1">Serine--tRNA ligase</fullName>
        <ecNumber evidence="1">6.1.1.11</ecNumber>
    </recommendedName>
    <alternativeName>
        <fullName evidence="1">Seryl-tRNA synthetase</fullName>
        <shortName evidence="1">SerRS</shortName>
    </alternativeName>
    <alternativeName>
        <fullName evidence="1">Seryl-tRNA(Ser/Sec) synthetase</fullName>
    </alternativeName>
</protein>
<gene>
    <name evidence="1" type="primary">serS</name>
    <name type="ordered locus">SAR0009</name>
</gene>
<organism>
    <name type="scientific">Staphylococcus aureus (strain MRSA252)</name>
    <dbReference type="NCBI Taxonomy" id="282458"/>
    <lineage>
        <taxon>Bacteria</taxon>
        <taxon>Bacillati</taxon>
        <taxon>Bacillota</taxon>
        <taxon>Bacilli</taxon>
        <taxon>Bacillales</taxon>
        <taxon>Staphylococcaceae</taxon>
        <taxon>Staphylococcus</taxon>
    </lineage>
</organism>